<organism>
    <name type="scientific">Acaryochloris marina (strain MBIC 11017)</name>
    <dbReference type="NCBI Taxonomy" id="329726"/>
    <lineage>
        <taxon>Bacteria</taxon>
        <taxon>Bacillati</taxon>
        <taxon>Cyanobacteriota</taxon>
        <taxon>Cyanophyceae</taxon>
        <taxon>Acaryochloridales</taxon>
        <taxon>Acaryochloridaceae</taxon>
        <taxon>Acaryochloris</taxon>
    </lineage>
</organism>
<comment type="function">
    <text evidence="1">An essential GTPase which binds GTP, GDP and possibly (p)ppGpp with moderate affinity, with high nucleotide exchange rates and a fairly low GTP hydrolysis rate. Plays a role in control of the cell cycle, stress response, ribosome biogenesis and in those bacteria that undergo differentiation, in morphogenesis control.</text>
</comment>
<comment type="cofactor">
    <cofactor evidence="1">
        <name>Mg(2+)</name>
        <dbReference type="ChEBI" id="CHEBI:18420"/>
    </cofactor>
</comment>
<comment type="subunit">
    <text evidence="1">Monomer.</text>
</comment>
<comment type="subcellular location">
    <subcellularLocation>
        <location evidence="1">Cytoplasm</location>
    </subcellularLocation>
</comment>
<comment type="similarity">
    <text evidence="1">Belongs to the TRAFAC class OBG-HflX-like GTPase superfamily. OBG GTPase family.</text>
</comment>
<sequence>MRFIDQTEIFVKAGDGGDGMVAFRREKYVPAGGPAGGNGGRGGSVILQASTQLQTLLDFKYKHQFVAEDGKRGGPKNLTGASGQDRLIEVPCGTVIYDADSMTLLGDLTTNGQTLTVAQGGKGGLGNKHFLSNRNRAPEHALPGLPGEEFRLHLELKLLAEVGIIGLPNAGKSTLISVLSAARPKIADYPFTTLIPNLGVVPRATGDGTVFADIPGLIEGAHEGVGLGHDFLRHVERTRLLVHLVDATAEDPEQDYQTIQKELSAYGQGLQNRPQLLVLNKIDAMDSEQLLEKQACLEQMSGSPVYLISAVAQQGLDTLLQQVWEELDRLPNDLQEAPIPVLDSPILRET</sequence>
<keyword id="KW-0963">Cytoplasm</keyword>
<keyword id="KW-0342">GTP-binding</keyword>
<keyword id="KW-0378">Hydrolase</keyword>
<keyword id="KW-0460">Magnesium</keyword>
<keyword id="KW-0479">Metal-binding</keyword>
<keyword id="KW-0547">Nucleotide-binding</keyword>
<keyword id="KW-1185">Reference proteome</keyword>
<dbReference type="EC" id="3.6.5.-" evidence="1"/>
<dbReference type="EMBL" id="CP000828">
    <property type="protein sequence ID" value="ABW26827.1"/>
    <property type="molecule type" value="Genomic_DNA"/>
</dbReference>
<dbReference type="SMR" id="B0CDA2"/>
<dbReference type="STRING" id="329726.AM1_1806"/>
<dbReference type="KEGG" id="amr:AM1_1806"/>
<dbReference type="eggNOG" id="COG0536">
    <property type="taxonomic scope" value="Bacteria"/>
</dbReference>
<dbReference type="HOGENOM" id="CLU_011747_2_0_3"/>
<dbReference type="OrthoDB" id="9807318at2"/>
<dbReference type="Proteomes" id="UP000000268">
    <property type="component" value="Chromosome"/>
</dbReference>
<dbReference type="GO" id="GO:0005737">
    <property type="term" value="C:cytoplasm"/>
    <property type="evidence" value="ECO:0007669"/>
    <property type="project" value="UniProtKB-SubCell"/>
</dbReference>
<dbReference type="GO" id="GO:0005525">
    <property type="term" value="F:GTP binding"/>
    <property type="evidence" value="ECO:0007669"/>
    <property type="project" value="UniProtKB-UniRule"/>
</dbReference>
<dbReference type="GO" id="GO:0003924">
    <property type="term" value="F:GTPase activity"/>
    <property type="evidence" value="ECO:0007669"/>
    <property type="project" value="UniProtKB-UniRule"/>
</dbReference>
<dbReference type="GO" id="GO:0000287">
    <property type="term" value="F:magnesium ion binding"/>
    <property type="evidence" value="ECO:0007669"/>
    <property type="project" value="InterPro"/>
</dbReference>
<dbReference type="GO" id="GO:0042254">
    <property type="term" value="P:ribosome biogenesis"/>
    <property type="evidence" value="ECO:0007669"/>
    <property type="project" value="UniProtKB-UniRule"/>
</dbReference>
<dbReference type="CDD" id="cd01898">
    <property type="entry name" value="Obg"/>
    <property type="match status" value="1"/>
</dbReference>
<dbReference type="FunFam" id="2.70.210.12:FF:000001">
    <property type="entry name" value="GTPase Obg"/>
    <property type="match status" value="1"/>
</dbReference>
<dbReference type="Gene3D" id="2.70.210.12">
    <property type="entry name" value="GTP1/OBG domain"/>
    <property type="match status" value="1"/>
</dbReference>
<dbReference type="Gene3D" id="3.40.50.300">
    <property type="entry name" value="P-loop containing nucleotide triphosphate hydrolases"/>
    <property type="match status" value="1"/>
</dbReference>
<dbReference type="HAMAP" id="MF_01454">
    <property type="entry name" value="GTPase_Obg"/>
    <property type="match status" value="1"/>
</dbReference>
<dbReference type="InterPro" id="IPR031167">
    <property type="entry name" value="G_OBG"/>
</dbReference>
<dbReference type="InterPro" id="IPR006073">
    <property type="entry name" value="GTP-bd"/>
</dbReference>
<dbReference type="InterPro" id="IPR014100">
    <property type="entry name" value="GTP-bd_Obg/CgtA"/>
</dbReference>
<dbReference type="InterPro" id="IPR006074">
    <property type="entry name" value="GTP1-OBG_CS"/>
</dbReference>
<dbReference type="InterPro" id="IPR006169">
    <property type="entry name" value="GTP1_OBG_dom"/>
</dbReference>
<dbReference type="InterPro" id="IPR036726">
    <property type="entry name" value="GTP1_OBG_dom_sf"/>
</dbReference>
<dbReference type="InterPro" id="IPR045086">
    <property type="entry name" value="OBG_GTPase"/>
</dbReference>
<dbReference type="InterPro" id="IPR027417">
    <property type="entry name" value="P-loop_NTPase"/>
</dbReference>
<dbReference type="InterPro" id="IPR005225">
    <property type="entry name" value="Small_GTP-bd"/>
</dbReference>
<dbReference type="NCBIfam" id="TIGR02729">
    <property type="entry name" value="Obg_CgtA"/>
    <property type="match status" value="1"/>
</dbReference>
<dbReference type="NCBIfam" id="NF008955">
    <property type="entry name" value="PRK12297.1"/>
    <property type="match status" value="1"/>
</dbReference>
<dbReference type="NCBIfam" id="NF008956">
    <property type="entry name" value="PRK12299.1"/>
    <property type="match status" value="1"/>
</dbReference>
<dbReference type="NCBIfam" id="TIGR00231">
    <property type="entry name" value="small_GTP"/>
    <property type="match status" value="1"/>
</dbReference>
<dbReference type="PANTHER" id="PTHR11702">
    <property type="entry name" value="DEVELOPMENTALLY REGULATED GTP-BINDING PROTEIN-RELATED"/>
    <property type="match status" value="1"/>
</dbReference>
<dbReference type="PANTHER" id="PTHR11702:SF31">
    <property type="entry name" value="MITOCHONDRIAL RIBOSOME-ASSOCIATED GTPASE 2"/>
    <property type="match status" value="1"/>
</dbReference>
<dbReference type="Pfam" id="PF01018">
    <property type="entry name" value="GTP1_OBG"/>
    <property type="match status" value="1"/>
</dbReference>
<dbReference type="Pfam" id="PF01926">
    <property type="entry name" value="MMR_HSR1"/>
    <property type="match status" value="1"/>
</dbReference>
<dbReference type="PIRSF" id="PIRSF002401">
    <property type="entry name" value="GTP_bd_Obg/CgtA"/>
    <property type="match status" value="1"/>
</dbReference>
<dbReference type="PRINTS" id="PR00326">
    <property type="entry name" value="GTP1OBG"/>
</dbReference>
<dbReference type="SUPFAM" id="SSF82051">
    <property type="entry name" value="Obg GTP-binding protein N-terminal domain"/>
    <property type="match status" value="1"/>
</dbReference>
<dbReference type="SUPFAM" id="SSF52540">
    <property type="entry name" value="P-loop containing nucleoside triphosphate hydrolases"/>
    <property type="match status" value="1"/>
</dbReference>
<dbReference type="PROSITE" id="PS51710">
    <property type="entry name" value="G_OBG"/>
    <property type="match status" value="1"/>
</dbReference>
<dbReference type="PROSITE" id="PS00905">
    <property type="entry name" value="GTP1_OBG"/>
    <property type="match status" value="1"/>
</dbReference>
<dbReference type="PROSITE" id="PS51883">
    <property type="entry name" value="OBG"/>
    <property type="match status" value="1"/>
</dbReference>
<evidence type="ECO:0000255" key="1">
    <source>
        <dbReference type="HAMAP-Rule" id="MF_01454"/>
    </source>
</evidence>
<evidence type="ECO:0000255" key="2">
    <source>
        <dbReference type="PROSITE-ProRule" id="PRU01231"/>
    </source>
</evidence>
<reference key="1">
    <citation type="journal article" date="2008" name="Proc. Natl. Acad. Sci. U.S.A.">
        <title>Niche adaptation and genome expansion in the chlorophyll d-producing cyanobacterium Acaryochloris marina.</title>
        <authorList>
            <person name="Swingley W.D."/>
            <person name="Chen M."/>
            <person name="Cheung P.C."/>
            <person name="Conrad A.L."/>
            <person name="Dejesa L.C."/>
            <person name="Hao J."/>
            <person name="Honchak B.M."/>
            <person name="Karbach L.E."/>
            <person name="Kurdoglu A."/>
            <person name="Lahiri S."/>
            <person name="Mastrian S.D."/>
            <person name="Miyashita H."/>
            <person name="Page L."/>
            <person name="Ramakrishna P."/>
            <person name="Satoh S."/>
            <person name="Sattley W.M."/>
            <person name="Shimada Y."/>
            <person name="Taylor H.L."/>
            <person name="Tomo T."/>
            <person name="Tsuchiya T."/>
            <person name="Wang Z.T."/>
            <person name="Raymond J."/>
            <person name="Mimuro M."/>
            <person name="Blankenship R.E."/>
            <person name="Touchman J.W."/>
        </authorList>
    </citation>
    <scope>NUCLEOTIDE SEQUENCE [LARGE SCALE GENOMIC DNA]</scope>
    <source>
        <strain>MBIC 11017</strain>
    </source>
</reference>
<name>OBG_ACAM1</name>
<gene>
    <name evidence="1" type="primary">obg</name>
    <name type="ordered locus">AM1_1806</name>
</gene>
<proteinExistence type="inferred from homology"/>
<feature type="chain" id="PRO_0000385655" description="GTPase Obg">
    <location>
        <begin position="1"/>
        <end position="350"/>
    </location>
</feature>
<feature type="domain" description="Obg" evidence="2">
    <location>
        <begin position="1"/>
        <end position="159"/>
    </location>
</feature>
<feature type="domain" description="OBG-type G" evidence="1">
    <location>
        <begin position="160"/>
        <end position="328"/>
    </location>
</feature>
<feature type="binding site" evidence="1">
    <location>
        <begin position="166"/>
        <end position="173"/>
    </location>
    <ligand>
        <name>GTP</name>
        <dbReference type="ChEBI" id="CHEBI:37565"/>
    </ligand>
</feature>
<feature type="binding site" evidence="1">
    <location>
        <position position="173"/>
    </location>
    <ligand>
        <name>Mg(2+)</name>
        <dbReference type="ChEBI" id="CHEBI:18420"/>
    </ligand>
</feature>
<feature type="binding site" evidence="1">
    <location>
        <begin position="191"/>
        <end position="195"/>
    </location>
    <ligand>
        <name>GTP</name>
        <dbReference type="ChEBI" id="CHEBI:37565"/>
    </ligand>
</feature>
<feature type="binding site" evidence="1">
    <location>
        <position position="193"/>
    </location>
    <ligand>
        <name>Mg(2+)</name>
        <dbReference type="ChEBI" id="CHEBI:18420"/>
    </ligand>
</feature>
<feature type="binding site" evidence="1">
    <location>
        <begin position="213"/>
        <end position="216"/>
    </location>
    <ligand>
        <name>GTP</name>
        <dbReference type="ChEBI" id="CHEBI:37565"/>
    </ligand>
</feature>
<feature type="binding site" evidence="1">
    <location>
        <begin position="280"/>
        <end position="283"/>
    </location>
    <ligand>
        <name>GTP</name>
        <dbReference type="ChEBI" id="CHEBI:37565"/>
    </ligand>
</feature>
<feature type="binding site" evidence="1">
    <location>
        <begin position="309"/>
        <end position="311"/>
    </location>
    <ligand>
        <name>GTP</name>
        <dbReference type="ChEBI" id="CHEBI:37565"/>
    </ligand>
</feature>
<accession>B0CDA2</accession>
<protein>
    <recommendedName>
        <fullName evidence="1">GTPase Obg</fullName>
        <ecNumber evidence="1">3.6.5.-</ecNumber>
    </recommendedName>
    <alternativeName>
        <fullName evidence="1">GTP-binding protein Obg</fullName>
    </alternativeName>
</protein>